<proteinExistence type="inferred from homology"/>
<keyword id="KW-0031">Aminopeptidase</keyword>
<keyword id="KW-0378">Hydrolase</keyword>
<keyword id="KW-0479">Metal-binding</keyword>
<keyword id="KW-0482">Metalloprotease</keyword>
<keyword id="KW-0645">Protease</keyword>
<keyword id="KW-1185">Reference proteome</keyword>
<keyword id="KW-0862">Zinc</keyword>
<name>APEB_PSEPK</name>
<gene>
    <name evidence="1" type="primary">apeB</name>
    <name type="ordered locus">PP_1730</name>
</gene>
<organism>
    <name type="scientific">Pseudomonas putida (strain ATCC 47054 / DSM 6125 / CFBP 8728 / NCIMB 11950 / KT2440)</name>
    <dbReference type="NCBI Taxonomy" id="160488"/>
    <lineage>
        <taxon>Bacteria</taxon>
        <taxon>Pseudomonadati</taxon>
        <taxon>Pseudomonadota</taxon>
        <taxon>Gammaproteobacteria</taxon>
        <taxon>Pseudomonadales</taxon>
        <taxon>Pseudomonadaceae</taxon>
        <taxon>Pseudomonas</taxon>
    </lineage>
</organism>
<accession>Q88M44</accession>
<dbReference type="EC" id="3.4.11.-" evidence="1"/>
<dbReference type="EMBL" id="AE015451">
    <property type="protein sequence ID" value="AAN67351.1"/>
    <property type="molecule type" value="Genomic_DNA"/>
</dbReference>
<dbReference type="RefSeq" id="NP_743887.1">
    <property type="nucleotide sequence ID" value="NC_002947.4"/>
</dbReference>
<dbReference type="RefSeq" id="WP_010952777.1">
    <property type="nucleotide sequence ID" value="NZ_CP169744.1"/>
</dbReference>
<dbReference type="SMR" id="Q88M44"/>
<dbReference type="STRING" id="160488.PP_1730"/>
<dbReference type="PaxDb" id="160488-PP_1730"/>
<dbReference type="KEGG" id="ppu:PP_1730"/>
<dbReference type="PATRIC" id="fig|160488.4.peg.1824"/>
<dbReference type="eggNOG" id="COG1362">
    <property type="taxonomic scope" value="Bacteria"/>
</dbReference>
<dbReference type="HOGENOM" id="CLU_019532_2_0_6"/>
<dbReference type="OrthoDB" id="5288740at2"/>
<dbReference type="PhylomeDB" id="Q88M44"/>
<dbReference type="BioCyc" id="PPUT160488:G1G01-1831-MONOMER"/>
<dbReference type="Proteomes" id="UP000000556">
    <property type="component" value="Chromosome"/>
</dbReference>
<dbReference type="GO" id="GO:0005737">
    <property type="term" value="C:cytoplasm"/>
    <property type="evidence" value="ECO:0007669"/>
    <property type="project" value="UniProtKB-ARBA"/>
</dbReference>
<dbReference type="GO" id="GO:0004177">
    <property type="term" value="F:aminopeptidase activity"/>
    <property type="evidence" value="ECO:0007669"/>
    <property type="project" value="UniProtKB-UniRule"/>
</dbReference>
<dbReference type="GO" id="GO:0008237">
    <property type="term" value="F:metallopeptidase activity"/>
    <property type="evidence" value="ECO:0007669"/>
    <property type="project" value="UniProtKB-UniRule"/>
</dbReference>
<dbReference type="GO" id="GO:0008270">
    <property type="term" value="F:zinc ion binding"/>
    <property type="evidence" value="ECO:0007669"/>
    <property type="project" value="UniProtKB-UniRule"/>
</dbReference>
<dbReference type="GO" id="GO:0006508">
    <property type="term" value="P:proteolysis"/>
    <property type="evidence" value="ECO:0007669"/>
    <property type="project" value="UniProtKB-UniRule"/>
</dbReference>
<dbReference type="CDD" id="cd05658">
    <property type="entry name" value="M18_DAP"/>
    <property type="match status" value="1"/>
</dbReference>
<dbReference type="FunFam" id="2.30.250.10:FF:000003">
    <property type="entry name" value="Probable M18 family aminopeptidase 2"/>
    <property type="match status" value="1"/>
</dbReference>
<dbReference type="Gene3D" id="2.30.250.10">
    <property type="entry name" value="Aminopeptidase i, Domain 2"/>
    <property type="match status" value="1"/>
</dbReference>
<dbReference type="Gene3D" id="3.40.630.10">
    <property type="entry name" value="Zn peptidases"/>
    <property type="match status" value="1"/>
</dbReference>
<dbReference type="HAMAP" id="MF_00467">
    <property type="entry name" value="Aminopeptidase_M18_2"/>
    <property type="match status" value="1"/>
</dbReference>
<dbReference type="InterPro" id="IPR022984">
    <property type="entry name" value="M18_aminopeptidase_2"/>
</dbReference>
<dbReference type="InterPro" id="IPR001948">
    <property type="entry name" value="Peptidase_M18"/>
</dbReference>
<dbReference type="InterPro" id="IPR023358">
    <property type="entry name" value="Peptidase_M18_dom2"/>
</dbReference>
<dbReference type="NCBIfam" id="NF002759">
    <property type="entry name" value="PRK02813.1"/>
    <property type="match status" value="1"/>
</dbReference>
<dbReference type="PANTHER" id="PTHR28570">
    <property type="entry name" value="ASPARTYL AMINOPEPTIDASE"/>
    <property type="match status" value="1"/>
</dbReference>
<dbReference type="PANTHER" id="PTHR28570:SF3">
    <property type="entry name" value="ASPARTYL AMINOPEPTIDASE"/>
    <property type="match status" value="1"/>
</dbReference>
<dbReference type="Pfam" id="PF02127">
    <property type="entry name" value="Peptidase_M18"/>
    <property type="match status" value="1"/>
</dbReference>
<dbReference type="PRINTS" id="PR00932">
    <property type="entry name" value="AMINO1PTASE"/>
</dbReference>
<dbReference type="SUPFAM" id="SSF101821">
    <property type="entry name" value="Aminopeptidase/glucanase lid domain"/>
    <property type="match status" value="1"/>
</dbReference>
<dbReference type="SUPFAM" id="SSF53187">
    <property type="entry name" value="Zn-dependent exopeptidases"/>
    <property type="match status" value="1"/>
</dbReference>
<comment type="cofactor">
    <cofactor evidence="1">
        <name>Zn(2+)</name>
        <dbReference type="ChEBI" id="CHEBI:29105"/>
    </cofactor>
</comment>
<comment type="similarity">
    <text evidence="1">Belongs to the peptidase M18 family.</text>
</comment>
<evidence type="ECO:0000255" key="1">
    <source>
        <dbReference type="HAMAP-Rule" id="MF_00467"/>
    </source>
</evidence>
<protein>
    <recommendedName>
        <fullName evidence="1">Probable M18 family aminopeptidase 2</fullName>
        <ecNumber evidence="1">3.4.11.-</ecNumber>
    </recommendedName>
</protein>
<sequence length="429" mass="46996">MRDALNTGLIEFLKASPTPFHATASLVQRLEAAGYKRLDERDSWDTETGGRYYVTRNDSSIIAIKLGKQSPLLNGIRMVGAHTDSPCLRVKPQPELQRQGFLQLGVEVYGGALLAPWFDRDLSLAGRVTYRRDGKVESQLIDFKLPVAIIPNLAIHLNRTANEGWAINPQNELPPILAQVAGDERIDFRALLTEQLAREHELIADVVLDYELSFYDTQDAALIGLNGDFIAGARLDNLLSCYAGLQALLAADSDETCVLVCNDHEEVGSCSACGADGPMLEQTLQRLLPDGDTYVRTVQRSLMVSADNAHGVHPNYADKHDGNHGPKLNAGPVIKVNNNQRYATNSETAGFFRHLCMAEEVPVQSFVVRSDMGCGSTIGPITASHLGVRTVDIGLPTFAMHSIRELCGSHDLAHLVKVLTAFYRSRELP</sequence>
<reference key="1">
    <citation type="journal article" date="2002" name="Environ. Microbiol.">
        <title>Complete genome sequence and comparative analysis of the metabolically versatile Pseudomonas putida KT2440.</title>
        <authorList>
            <person name="Nelson K.E."/>
            <person name="Weinel C."/>
            <person name="Paulsen I.T."/>
            <person name="Dodson R.J."/>
            <person name="Hilbert H."/>
            <person name="Martins dos Santos V.A.P."/>
            <person name="Fouts D.E."/>
            <person name="Gill S.R."/>
            <person name="Pop M."/>
            <person name="Holmes M."/>
            <person name="Brinkac L.M."/>
            <person name="Beanan M.J."/>
            <person name="DeBoy R.T."/>
            <person name="Daugherty S.C."/>
            <person name="Kolonay J.F."/>
            <person name="Madupu R."/>
            <person name="Nelson W.C."/>
            <person name="White O."/>
            <person name="Peterson J.D."/>
            <person name="Khouri H.M."/>
            <person name="Hance I."/>
            <person name="Chris Lee P."/>
            <person name="Holtzapple E.K."/>
            <person name="Scanlan D."/>
            <person name="Tran K."/>
            <person name="Moazzez A."/>
            <person name="Utterback T.R."/>
            <person name="Rizzo M."/>
            <person name="Lee K."/>
            <person name="Kosack D."/>
            <person name="Moestl D."/>
            <person name="Wedler H."/>
            <person name="Lauber J."/>
            <person name="Stjepandic D."/>
            <person name="Hoheisel J."/>
            <person name="Straetz M."/>
            <person name="Heim S."/>
            <person name="Kiewitz C."/>
            <person name="Eisen J.A."/>
            <person name="Timmis K.N."/>
            <person name="Duesterhoeft A."/>
            <person name="Tuemmler B."/>
            <person name="Fraser C.M."/>
        </authorList>
    </citation>
    <scope>NUCLEOTIDE SEQUENCE [LARGE SCALE GENOMIC DNA]</scope>
    <source>
        <strain>ATCC 47054 / DSM 6125 / CFBP 8728 / NCIMB 11950 / KT2440</strain>
    </source>
</reference>
<feature type="chain" id="PRO_0000173466" description="Probable M18 family aminopeptidase 2">
    <location>
        <begin position="1"/>
        <end position="429"/>
    </location>
</feature>
<feature type="binding site" evidence="1">
    <location>
        <position position="82"/>
    </location>
    <ligand>
        <name>Zn(2+)</name>
        <dbReference type="ChEBI" id="CHEBI:29105"/>
    </ligand>
</feature>
<feature type="binding site" evidence="1">
    <location>
        <position position="156"/>
    </location>
    <ligand>
        <name>Zn(2+)</name>
        <dbReference type="ChEBI" id="CHEBI:29105"/>
    </ligand>
</feature>
<feature type="binding site" evidence="1">
    <location>
        <position position="401"/>
    </location>
    <ligand>
        <name>Zn(2+)</name>
        <dbReference type="ChEBI" id="CHEBI:29105"/>
    </ligand>
</feature>